<accession>C1CAM1</accession>
<name>RS17_STRP7</name>
<gene>
    <name evidence="1" type="primary">rpsQ</name>
    <name type="ordered locus">SP70585_0274</name>
</gene>
<dbReference type="EMBL" id="CP000918">
    <property type="protein sequence ID" value="ACO16513.1"/>
    <property type="molecule type" value="Genomic_DNA"/>
</dbReference>
<dbReference type="RefSeq" id="WP_000440801.1">
    <property type="nucleotide sequence ID" value="NC_012468.1"/>
</dbReference>
<dbReference type="SMR" id="C1CAM1"/>
<dbReference type="GeneID" id="93920913"/>
<dbReference type="KEGG" id="snm:SP70585_0274"/>
<dbReference type="HOGENOM" id="CLU_073626_1_0_9"/>
<dbReference type="Proteomes" id="UP000002211">
    <property type="component" value="Chromosome"/>
</dbReference>
<dbReference type="GO" id="GO:0022627">
    <property type="term" value="C:cytosolic small ribosomal subunit"/>
    <property type="evidence" value="ECO:0007669"/>
    <property type="project" value="TreeGrafter"/>
</dbReference>
<dbReference type="GO" id="GO:0019843">
    <property type="term" value="F:rRNA binding"/>
    <property type="evidence" value="ECO:0007669"/>
    <property type="project" value="UniProtKB-UniRule"/>
</dbReference>
<dbReference type="GO" id="GO:0003735">
    <property type="term" value="F:structural constituent of ribosome"/>
    <property type="evidence" value="ECO:0007669"/>
    <property type="project" value="InterPro"/>
</dbReference>
<dbReference type="GO" id="GO:0006412">
    <property type="term" value="P:translation"/>
    <property type="evidence" value="ECO:0007669"/>
    <property type="project" value="UniProtKB-UniRule"/>
</dbReference>
<dbReference type="CDD" id="cd00364">
    <property type="entry name" value="Ribosomal_uS17"/>
    <property type="match status" value="1"/>
</dbReference>
<dbReference type="FunFam" id="2.40.50.140:FF:000026">
    <property type="entry name" value="30S ribosomal protein S17"/>
    <property type="match status" value="1"/>
</dbReference>
<dbReference type="Gene3D" id="2.40.50.140">
    <property type="entry name" value="Nucleic acid-binding proteins"/>
    <property type="match status" value="1"/>
</dbReference>
<dbReference type="HAMAP" id="MF_01345_B">
    <property type="entry name" value="Ribosomal_uS17_B"/>
    <property type="match status" value="1"/>
</dbReference>
<dbReference type="InterPro" id="IPR012340">
    <property type="entry name" value="NA-bd_OB-fold"/>
</dbReference>
<dbReference type="InterPro" id="IPR000266">
    <property type="entry name" value="Ribosomal_uS17"/>
</dbReference>
<dbReference type="InterPro" id="IPR019984">
    <property type="entry name" value="Ribosomal_uS17_bact/chlr"/>
</dbReference>
<dbReference type="InterPro" id="IPR019979">
    <property type="entry name" value="Ribosomal_uS17_CS"/>
</dbReference>
<dbReference type="NCBIfam" id="NF004123">
    <property type="entry name" value="PRK05610.1"/>
    <property type="match status" value="1"/>
</dbReference>
<dbReference type="NCBIfam" id="TIGR03635">
    <property type="entry name" value="uS17_bact"/>
    <property type="match status" value="1"/>
</dbReference>
<dbReference type="PANTHER" id="PTHR10744">
    <property type="entry name" value="40S RIBOSOMAL PROTEIN S11 FAMILY MEMBER"/>
    <property type="match status" value="1"/>
</dbReference>
<dbReference type="PANTHER" id="PTHR10744:SF1">
    <property type="entry name" value="SMALL RIBOSOMAL SUBUNIT PROTEIN US17M"/>
    <property type="match status" value="1"/>
</dbReference>
<dbReference type="Pfam" id="PF00366">
    <property type="entry name" value="Ribosomal_S17"/>
    <property type="match status" value="1"/>
</dbReference>
<dbReference type="PRINTS" id="PR00973">
    <property type="entry name" value="RIBOSOMALS17"/>
</dbReference>
<dbReference type="SUPFAM" id="SSF50249">
    <property type="entry name" value="Nucleic acid-binding proteins"/>
    <property type="match status" value="1"/>
</dbReference>
<dbReference type="PROSITE" id="PS00056">
    <property type="entry name" value="RIBOSOMAL_S17"/>
    <property type="match status" value="1"/>
</dbReference>
<sequence length="86" mass="10011">MERNNRKVLVGRVVSDKMDKTITVVVETKRNHPVYGKRINYSKKYKAHDENNVAKEGDIVRIMETRPLSATKRFRLVEVVEEAVII</sequence>
<protein>
    <recommendedName>
        <fullName evidence="1">Small ribosomal subunit protein uS17</fullName>
    </recommendedName>
    <alternativeName>
        <fullName evidence="2">30S ribosomal protein S17</fullName>
    </alternativeName>
</protein>
<proteinExistence type="inferred from homology"/>
<feature type="chain" id="PRO_1000166498" description="Small ribosomal subunit protein uS17">
    <location>
        <begin position="1"/>
        <end position="86"/>
    </location>
</feature>
<organism>
    <name type="scientific">Streptococcus pneumoniae (strain 70585)</name>
    <dbReference type="NCBI Taxonomy" id="488221"/>
    <lineage>
        <taxon>Bacteria</taxon>
        <taxon>Bacillati</taxon>
        <taxon>Bacillota</taxon>
        <taxon>Bacilli</taxon>
        <taxon>Lactobacillales</taxon>
        <taxon>Streptococcaceae</taxon>
        <taxon>Streptococcus</taxon>
    </lineage>
</organism>
<comment type="function">
    <text evidence="1">One of the primary rRNA binding proteins, it binds specifically to the 5'-end of 16S ribosomal RNA.</text>
</comment>
<comment type="subunit">
    <text evidence="1">Part of the 30S ribosomal subunit.</text>
</comment>
<comment type="similarity">
    <text evidence="1">Belongs to the universal ribosomal protein uS17 family.</text>
</comment>
<evidence type="ECO:0000255" key="1">
    <source>
        <dbReference type="HAMAP-Rule" id="MF_01345"/>
    </source>
</evidence>
<evidence type="ECO:0000305" key="2"/>
<keyword id="KW-0687">Ribonucleoprotein</keyword>
<keyword id="KW-0689">Ribosomal protein</keyword>
<keyword id="KW-0694">RNA-binding</keyword>
<keyword id="KW-0699">rRNA-binding</keyword>
<reference key="1">
    <citation type="journal article" date="2010" name="Genome Biol.">
        <title>Structure and dynamics of the pan-genome of Streptococcus pneumoniae and closely related species.</title>
        <authorList>
            <person name="Donati C."/>
            <person name="Hiller N.L."/>
            <person name="Tettelin H."/>
            <person name="Muzzi A."/>
            <person name="Croucher N.J."/>
            <person name="Angiuoli S.V."/>
            <person name="Oggioni M."/>
            <person name="Dunning Hotopp J.C."/>
            <person name="Hu F.Z."/>
            <person name="Riley D.R."/>
            <person name="Covacci A."/>
            <person name="Mitchell T.J."/>
            <person name="Bentley S.D."/>
            <person name="Kilian M."/>
            <person name="Ehrlich G.D."/>
            <person name="Rappuoli R."/>
            <person name="Moxon E.R."/>
            <person name="Masignani V."/>
        </authorList>
    </citation>
    <scope>NUCLEOTIDE SEQUENCE [LARGE SCALE GENOMIC DNA]</scope>
    <source>
        <strain>70585</strain>
    </source>
</reference>